<sequence length="396" mass="43202">MSERKLFTSESVSEGHPDKIADQISDAILDAILAKDPEAHVAAETAVYTGSVHVFGEISTNAYVDINRVVRDTIAEIGYTNTEYGFSAETVGVHPSLVEQSPDIAQGVNEALEVRGNADQDPLDLIGAGDQGLMFGFAVDETEELMPLPIALSHKLVRRLAELRKSGEISYLRPDAKSQVTVEYDENDRPVRVDTVVISTQHDPEVTNEQIHQDVIDKVIKEVIPSSYLDDKTKFFINPTGRFVIGGPQGDSGLTGRKIIVDTYGGYSRHGGGAFSGKDATKVDRSASYAARYIAKNIVAADLAKKAEVQLAYAIGVAQPVSVRIDTFGTGTVAESQLEKAARQIFDLRPAGIIQMLDLKRPIYRQTSAYGHMGRTDIDLPWERLDKVDALKEAVK</sequence>
<organism>
    <name type="scientific">Streptococcus pneumoniae (strain 70585)</name>
    <dbReference type="NCBI Taxonomy" id="488221"/>
    <lineage>
        <taxon>Bacteria</taxon>
        <taxon>Bacillati</taxon>
        <taxon>Bacillota</taxon>
        <taxon>Bacilli</taxon>
        <taxon>Lactobacillales</taxon>
        <taxon>Streptococcaceae</taxon>
        <taxon>Streptococcus</taxon>
    </lineage>
</organism>
<comment type="function">
    <text evidence="1">Catalyzes the formation of S-adenosylmethionine (AdoMet) from methionine and ATP. The overall synthetic reaction is composed of two sequential steps, AdoMet formation and the subsequent tripolyphosphate hydrolysis which occurs prior to release of AdoMet from the enzyme.</text>
</comment>
<comment type="catalytic activity">
    <reaction evidence="1">
        <text>L-methionine + ATP + H2O = S-adenosyl-L-methionine + phosphate + diphosphate</text>
        <dbReference type="Rhea" id="RHEA:21080"/>
        <dbReference type="ChEBI" id="CHEBI:15377"/>
        <dbReference type="ChEBI" id="CHEBI:30616"/>
        <dbReference type="ChEBI" id="CHEBI:33019"/>
        <dbReference type="ChEBI" id="CHEBI:43474"/>
        <dbReference type="ChEBI" id="CHEBI:57844"/>
        <dbReference type="ChEBI" id="CHEBI:59789"/>
        <dbReference type="EC" id="2.5.1.6"/>
    </reaction>
</comment>
<comment type="cofactor">
    <cofactor evidence="1">
        <name>Mg(2+)</name>
        <dbReference type="ChEBI" id="CHEBI:18420"/>
    </cofactor>
    <text evidence="1">Binds 2 divalent ions per subunit.</text>
</comment>
<comment type="cofactor">
    <cofactor evidence="1">
        <name>K(+)</name>
        <dbReference type="ChEBI" id="CHEBI:29103"/>
    </cofactor>
    <text evidence="1">Binds 1 potassium ion per subunit.</text>
</comment>
<comment type="pathway">
    <text evidence="1">Amino-acid biosynthesis; S-adenosyl-L-methionine biosynthesis; S-adenosyl-L-methionine from L-methionine: step 1/1.</text>
</comment>
<comment type="subunit">
    <text evidence="1">Homotetramer; dimer of dimers.</text>
</comment>
<comment type="subcellular location">
    <subcellularLocation>
        <location evidence="1">Cytoplasm</location>
    </subcellularLocation>
</comment>
<comment type="similarity">
    <text evidence="1">Belongs to the AdoMet synthase family.</text>
</comment>
<proteinExistence type="inferred from homology"/>
<gene>
    <name evidence="1" type="primary">metK</name>
    <name type="ordered locus">SP70585_0806</name>
</gene>
<protein>
    <recommendedName>
        <fullName evidence="1">S-adenosylmethionine synthase</fullName>
        <shortName evidence="1">AdoMet synthase</shortName>
        <ecNumber evidence="1">2.5.1.6</ecNumber>
    </recommendedName>
    <alternativeName>
        <fullName evidence="1">MAT</fullName>
    </alternativeName>
    <alternativeName>
        <fullName evidence="1">Methionine adenosyltransferase</fullName>
    </alternativeName>
</protein>
<keyword id="KW-0067">ATP-binding</keyword>
<keyword id="KW-0963">Cytoplasm</keyword>
<keyword id="KW-0460">Magnesium</keyword>
<keyword id="KW-0479">Metal-binding</keyword>
<keyword id="KW-0547">Nucleotide-binding</keyword>
<keyword id="KW-0554">One-carbon metabolism</keyword>
<keyword id="KW-0630">Potassium</keyword>
<keyword id="KW-0808">Transferase</keyword>
<name>METK_STRP7</name>
<evidence type="ECO:0000255" key="1">
    <source>
        <dbReference type="HAMAP-Rule" id="MF_00086"/>
    </source>
</evidence>
<feature type="chain" id="PRO_1000196728" description="S-adenosylmethionine synthase">
    <location>
        <begin position="1"/>
        <end position="396"/>
    </location>
</feature>
<feature type="region of interest" description="Flexible loop" evidence="1">
    <location>
        <begin position="100"/>
        <end position="110"/>
    </location>
</feature>
<feature type="binding site" description="in other chain" evidence="1">
    <location>
        <position position="16"/>
    </location>
    <ligand>
        <name>ATP</name>
        <dbReference type="ChEBI" id="CHEBI:30616"/>
        <note>ligand shared between two neighboring subunits</note>
    </ligand>
</feature>
<feature type="binding site" evidence="1">
    <location>
        <position position="18"/>
    </location>
    <ligand>
        <name>Mg(2+)</name>
        <dbReference type="ChEBI" id="CHEBI:18420"/>
    </ligand>
</feature>
<feature type="binding site" evidence="1">
    <location>
        <position position="44"/>
    </location>
    <ligand>
        <name>K(+)</name>
        <dbReference type="ChEBI" id="CHEBI:29103"/>
    </ligand>
</feature>
<feature type="binding site" description="in other chain" evidence="1">
    <location>
        <position position="57"/>
    </location>
    <ligand>
        <name>L-methionine</name>
        <dbReference type="ChEBI" id="CHEBI:57844"/>
        <note>ligand shared between two neighboring subunits</note>
    </ligand>
</feature>
<feature type="binding site" description="in other chain" evidence="1">
    <location>
        <position position="100"/>
    </location>
    <ligand>
        <name>L-methionine</name>
        <dbReference type="ChEBI" id="CHEBI:57844"/>
        <note>ligand shared between two neighboring subunits</note>
    </ligand>
</feature>
<feature type="binding site" description="in other chain" evidence="1">
    <location>
        <begin position="175"/>
        <end position="177"/>
    </location>
    <ligand>
        <name>ATP</name>
        <dbReference type="ChEBI" id="CHEBI:30616"/>
        <note>ligand shared between two neighboring subunits</note>
    </ligand>
</feature>
<feature type="binding site" description="in other chain" evidence="1">
    <location>
        <begin position="242"/>
        <end position="243"/>
    </location>
    <ligand>
        <name>ATP</name>
        <dbReference type="ChEBI" id="CHEBI:30616"/>
        <note>ligand shared between two neighboring subunits</note>
    </ligand>
</feature>
<feature type="binding site" evidence="1">
    <location>
        <position position="251"/>
    </location>
    <ligand>
        <name>ATP</name>
        <dbReference type="ChEBI" id="CHEBI:30616"/>
        <note>ligand shared between two neighboring subunits</note>
    </ligand>
</feature>
<feature type="binding site" evidence="1">
    <location>
        <position position="251"/>
    </location>
    <ligand>
        <name>L-methionine</name>
        <dbReference type="ChEBI" id="CHEBI:57844"/>
        <note>ligand shared between two neighboring subunits</note>
    </ligand>
</feature>
<feature type="binding site" description="in other chain" evidence="1">
    <location>
        <begin position="257"/>
        <end position="258"/>
    </location>
    <ligand>
        <name>ATP</name>
        <dbReference type="ChEBI" id="CHEBI:30616"/>
        <note>ligand shared between two neighboring subunits</note>
    </ligand>
</feature>
<feature type="binding site" evidence="1">
    <location>
        <position position="274"/>
    </location>
    <ligand>
        <name>ATP</name>
        <dbReference type="ChEBI" id="CHEBI:30616"/>
        <note>ligand shared between two neighboring subunits</note>
    </ligand>
</feature>
<feature type="binding site" evidence="1">
    <location>
        <position position="278"/>
    </location>
    <ligand>
        <name>ATP</name>
        <dbReference type="ChEBI" id="CHEBI:30616"/>
        <note>ligand shared between two neighboring subunits</note>
    </ligand>
</feature>
<feature type="binding site" description="in other chain" evidence="1">
    <location>
        <position position="282"/>
    </location>
    <ligand>
        <name>L-methionine</name>
        <dbReference type="ChEBI" id="CHEBI:57844"/>
        <note>ligand shared between two neighboring subunits</note>
    </ligand>
</feature>
<reference key="1">
    <citation type="journal article" date="2010" name="Genome Biol.">
        <title>Structure and dynamics of the pan-genome of Streptococcus pneumoniae and closely related species.</title>
        <authorList>
            <person name="Donati C."/>
            <person name="Hiller N.L."/>
            <person name="Tettelin H."/>
            <person name="Muzzi A."/>
            <person name="Croucher N.J."/>
            <person name="Angiuoli S.V."/>
            <person name="Oggioni M."/>
            <person name="Dunning Hotopp J.C."/>
            <person name="Hu F.Z."/>
            <person name="Riley D.R."/>
            <person name="Covacci A."/>
            <person name="Mitchell T.J."/>
            <person name="Bentley S.D."/>
            <person name="Kilian M."/>
            <person name="Ehrlich G.D."/>
            <person name="Rappuoli R."/>
            <person name="Moxon E.R."/>
            <person name="Masignani V."/>
        </authorList>
    </citation>
    <scope>NUCLEOTIDE SEQUENCE [LARGE SCALE GENOMIC DNA]</scope>
    <source>
        <strain>70585</strain>
    </source>
</reference>
<dbReference type="EC" id="2.5.1.6" evidence="1"/>
<dbReference type="EMBL" id="CP000918">
    <property type="protein sequence ID" value="ACO16598.1"/>
    <property type="molecule type" value="Genomic_DNA"/>
</dbReference>
<dbReference type="RefSeq" id="WP_000003937.1">
    <property type="nucleotide sequence ID" value="NC_012468.1"/>
</dbReference>
<dbReference type="SMR" id="C1C6A5"/>
<dbReference type="KEGG" id="snm:SP70585_0806"/>
<dbReference type="HOGENOM" id="CLU_041802_1_1_9"/>
<dbReference type="UniPathway" id="UPA00315">
    <property type="reaction ID" value="UER00080"/>
</dbReference>
<dbReference type="Proteomes" id="UP000002211">
    <property type="component" value="Chromosome"/>
</dbReference>
<dbReference type="GO" id="GO:0005737">
    <property type="term" value="C:cytoplasm"/>
    <property type="evidence" value="ECO:0007669"/>
    <property type="project" value="UniProtKB-SubCell"/>
</dbReference>
<dbReference type="GO" id="GO:0005524">
    <property type="term" value="F:ATP binding"/>
    <property type="evidence" value="ECO:0007669"/>
    <property type="project" value="UniProtKB-UniRule"/>
</dbReference>
<dbReference type="GO" id="GO:0000287">
    <property type="term" value="F:magnesium ion binding"/>
    <property type="evidence" value="ECO:0007669"/>
    <property type="project" value="UniProtKB-UniRule"/>
</dbReference>
<dbReference type="GO" id="GO:0004478">
    <property type="term" value="F:methionine adenosyltransferase activity"/>
    <property type="evidence" value="ECO:0007669"/>
    <property type="project" value="UniProtKB-UniRule"/>
</dbReference>
<dbReference type="GO" id="GO:0006730">
    <property type="term" value="P:one-carbon metabolic process"/>
    <property type="evidence" value="ECO:0007669"/>
    <property type="project" value="UniProtKB-KW"/>
</dbReference>
<dbReference type="GO" id="GO:0006556">
    <property type="term" value="P:S-adenosylmethionine biosynthetic process"/>
    <property type="evidence" value="ECO:0007669"/>
    <property type="project" value="UniProtKB-UniRule"/>
</dbReference>
<dbReference type="CDD" id="cd18079">
    <property type="entry name" value="S-AdoMet_synt"/>
    <property type="match status" value="1"/>
</dbReference>
<dbReference type="FunFam" id="3.30.300.10:FF:000003">
    <property type="entry name" value="S-adenosylmethionine synthase"/>
    <property type="match status" value="1"/>
</dbReference>
<dbReference type="Gene3D" id="3.30.300.10">
    <property type="match status" value="3"/>
</dbReference>
<dbReference type="HAMAP" id="MF_00086">
    <property type="entry name" value="S_AdoMet_synth1"/>
    <property type="match status" value="1"/>
</dbReference>
<dbReference type="InterPro" id="IPR022631">
    <property type="entry name" value="ADOMET_SYNTHASE_CS"/>
</dbReference>
<dbReference type="InterPro" id="IPR022630">
    <property type="entry name" value="S-AdoMet_synt_C"/>
</dbReference>
<dbReference type="InterPro" id="IPR022629">
    <property type="entry name" value="S-AdoMet_synt_central"/>
</dbReference>
<dbReference type="InterPro" id="IPR022628">
    <property type="entry name" value="S-AdoMet_synt_N"/>
</dbReference>
<dbReference type="InterPro" id="IPR002133">
    <property type="entry name" value="S-AdoMet_synthetase"/>
</dbReference>
<dbReference type="InterPro" id="IPR022636">
    <property type="entry name" value="S-AdoMet_synthetase_sfam"/>
</dbReference>
<dbReference type="NCBIfam" id="TIGR01034">
    <property type="entry name" value="metK"/>
    <property type="match status" value="1"/>
</dbReference>
<dbReference type="PANTHER" id="PTHR11964">
    <property type="entry name" value="S-ADENOSYLMETHIONINE SYNTHETASE"/>
    <property type="match status" value="1"/>
</dbReference>
<dbReference type="Pfam" id="PF02773">
    <property type="entry name" value="S-AdoMet_synt_C"/>
    <property type="match status" value="1"/>
</dbReference>
<dbReference type="Pfam" id="PF02772">
    <property type="entry name" value="S-AdoMet_synt_M"/>
    <property type="match status" value="1"/>
</dbReference>
<dbReference type="Pfam" id="PF00438">
    <property type="entry name" value="S-AdoMet_synt_N"/>
    <property type="match status" value="1"/>
</dbReference>
<dbReference type="PIRSF" id="PIRSF000497">
    <property type="entry name" value="MAT"/>
    <property type="match status" value="1"/>
</dbReference>
<dbReference type="SUPFAM" id="SSF55973">
    <property type="entry name" value="S-adenosylmethionine synthetase"/>
    <property type="match status" value="3"/>
</dbReference>
<dbReference type="PROSITE" id="PS00376">
    <property type="entry name" value="ADOMET_SYNTHASE_1"/>
    <property type="match status" value="1"/>
</dbReference>
<dbReference type="PROSITE" id="PS00377">
    <property type="entry name" value="ADOMET_SYNTHASE_2"/>
    <property type="match status" value="1"/>
</dbReference>
<accession>C1C6A5</accession>